<dbReference type="EC" id="3.6.1.-" evidence="6"/>
<dbReference type="EMBL" id="KF408295">
    <property type="protein sequence ID" value="AHJ80885.1"/>
    <property type="molecule type" value="mRNA"/>
</dbReference>
<dbReference type="SMR" id="W8E7D1"/>
<dbReference type="BRENDA" id="3.1.15.1">
    <property type="organism ID" value="6665"/>
</dbReference>
<dbReference type="GO" id="GO:0005576">
    <property type="term" value="C:extracellular region"/>
    <property type="evidence" value="ECO:0007669"/>
    <property type="project" value="UniProtKB-SubCell"/>
</dbReference>
<dbReference type="GO" id="GO:0043262">
    <property type="term" value="F:ADP phosphatase activity"/>
    <property type="evidence" value="ECO:0007669"/>
    <property type="project" value="RHEA"/>
</dbReference>
<dbReference type="GO" id="GO:0046872">
    <property type="term" value="F:metal ion binding"/>
    <property type="evidence" value="ECO:0007669"/>
    <property type="project" value="UniProtKB-KW"/>
</dbReference>
<dbReference type="GO" id="GO:0003676">
    <property type="term" value="F:nucleic acid binding"/>
    <property type="evidence" value="ECO:0007669"/>
    <property type="project" value="InterPro"/>
</dbReference>
<dbReference type="GO" id="GO:0047429">
    <property type="term" value="F:nucleoside triphosphate diphosphatase activity"/>
    <property type="evidence" value="ECO:0007669"/>
    <property type="project" value="TreeGrafter"/>
</dbReference>
<dbReference type="GO" id="GO:0090729">
    <property type="term" value="F:toxin activity"/>
    <property type="evidence" value="ECO:0007669"/>
    <property type="project" value="UniProtKB-KW"/>
</dbReference>
<dbReference type="GO" id="GO:0009143">
    <property type="term" value="P:nucleoside triphosphate catabolic process"/>
    <property type="evidence" value="ECO:0007669"/>
    <property type="project" value="TreeGrafter"/>
</dbReference>
<dbReference type="CDD" id="cd16018">
    <property type="entry name" value="Enpp"/>
    <property type="match status" value="1"/>
</dbReference>
<dbReference type="CDD" id="cd00091">
    <property type="entry name" value="NUC"/>
    <property type="match status" value="1"/>
</dbReference>
<dbReference type="FunFam" id="4.10.410.20:FF:000001">
    <property type="entry name" value="Ectonucleotide pyrophosphatase/phosphodiesterase family member 2"/>
    <property type="match status" value="1"/>
</dbReference>
<dbReference type="Gene3D" id="4.10.410.20">
    <property type="match status" value="2"/>
</dbReference>
<dbReference type="Gene3D" id="3.40.720.10">
    <property type="entry name" value="Alkaline Phosphatase, subunit A"/>
    <property type="match status" value="1"/>
</dbReference>
<dbReference type="Gene3D" id="3.40.570.10">
    <property type="entry name" value="Extracellular Endonuclease, subunit A"/>
    <property type="match status" value="1"/>
</dbReference>
<dbReference type="InterPro" id="IPR017850">
    <property type="entry name" value="Alkaline_phosphatase_core_sf"/>
</dbReference>
<dbReference type="InterPro" id="IPR044929">
    <property type="entry name" value="DNA/RNA_non-sp_Endonuclease_sf"/>
</dbReference>
<dbReference type="InterPro" id="IPR001604">
    <property type="entry name" value="Endo_G_ENPP1-like_dom"/>
</dbReference>
<dbReference type="InterPro" id="IPR020821">
    <property type="entry name" value="ENPP1-3/EXOG-like_nuc-like"/>
</dbReference>
<dbReference type="InterPro" id="IPR044925">
    <property type="entry name" value="His-Me_finger_sf"/>
</dbReference>
<dbReference type="InterPro" id="IPR002591">
    <property type="entry name" value="Phosphodiest/P_Trfase"/>
</dbReference>
<dbReference type="InterPro" id="IPR036024">
    <property type="entry name" value="Somatomedin_B-like_dom_sf"/>
</dbReference>
<dbReference type="InterPro" id="IPR001212">
    <property type="entry name" value="Somatomedin_B_dom"/>
</dbReference>
<dbReference type="PANTHER" id="PTHR10151">
    <property type="entry name" value="ECTONUCLEOTIDE PYROPHOSPHATASE/PHOSPHODIESTERASE"/>
    <property type="match status" value="1"/>
</dbReference>
<dbReference type="PANTHER" id="PTHR10151:SF107">
    <property type="entry name" value="ECTONUCLEOTIDE PYROPHOSPHATASE_PHOSPHODIESTERASE FAMILY MEMBER 3"/>
    <property type="match status" value="1"/>
</dbReference>
<dbReference type="Pfam" id="PF01223">
    <property type="entry name" value="Endonuclease_NS"/>
    <property type="match status" value="1"/>
</dbReference>
<dbReference type="Pfam" id="PF01663">
    <property type="entry name" value="Phosphodiest"/>
    <property type="match status" value="1"/>
</dbReference>
<dbReference type="Pfam" id="PF01033">
    <property type="entry name" value="Somatomedin_B"/>
    <property type="match status" value="2"/>
</dbReference>
<dbReference type="SMART" id="SM00892">
    <property type="entry name" value="Endonuclease_NS"/>
    <property type="match status" value="1"/>
</dbReference>
<dbReference type="SMART" id="SM00477">
    <property type="entry name" value="NUC"/>
    <property type="match status" value="1"/>
</dbReference>
<dbReference type="SMART" id="SM00201">
    <property type="entry name" value="SO"/>
    <property type="match status" value="2"/>
</dbReference>
<dbReference type="SUPFAM" id="SSF53649">
    <property type="entry name" value="Alkaline phosphatase-like"/>
    <property type="match status" value="1"/>
</dbReference>
<dbReference type="SUPFAM" id="SSF54060">
    <property type="entry name" value="His-Me finger endonucleases"/>
    <property type="match status" value="1"/>
</dbReference>
<dbReference type="SUPFAM" id="SSF90188">
    <property type="entry name" value="Somatomedin B domain"/>
    <property type="match status" value="2"/>
</dbReference>
<dbReference type="PROSITE" id="PS00524">
    <property type="entry name" value="SMB_1"/>
    <property type="match status" value="2"/>
</dbReference>
<dbReference type="PROSITE" id="PS50958">
    <property type="entry name" value="SMB_2"/>
    <property type="match status" value="2"/>
</dbReference>
<comment type="function">
    <text evidence="6">Hydrolyzes ADP with high activity (PubMed:25079051). Shows weak or no activity on 5'-AMP, 5'-GMP, 3'-AMP, ATP, cAMP, and cGMP (PubMed:25079051). Is devoid of monophosphatase and proteinase activities (PubMed:25079051). Dose-dependently inhibits platelet aggregation induced by ADP (IC(50)=0.99 uM) and collagen (IC(50)=1.4 uM) (PubMed:25079051).</text>
</comment>
<comment type="catalytic activity">
    <reaction evidence="6">
        <text>ADP + H2O = AMP + phosphate + H(+)</text>
        <dbReference type="Rhea" id="RHEA:61436"/>
        <dbReference type="ChEBI" id="CHEBI:15377"/>
        <dbReference type="ChEBI" id="CHEBI:15378"/>
        <dbReference type="ChEBI" id="CHEBI:43474"/>
        <dbReference type="ChEBI" id="CHEBI:456215"/>
        <dbReference type="ChEBI" id="CHEBI:456216"/>
    </reaction>
</comment>
<comment type="cofactor">
    <cofactor evidence="2">
        <name>a divalent metal cation</name>
        <dbReference type="ChEBI" id="CHEBI:60240"/>
    </cofactor>
    <text evidence="2">Binds 2 divalent metal cations per subunit.</text>
</comment>
<comment type="biophysicochemical properties">
    <phDependence>
        <text evidence="6">Optimum pH is 8.5-9.0.</text>
    </phDependence>
    <temperatureDependence>
        <text evidence="6">Optimum temperature is 60 degrees Celsius.</text>
    </temperatureDependence>
</comment>
<comment type="subunit">
    <text evidence="6">Monomer cleaved in two subunits; disulfide-linked. Is synthesized as a single-chain protein and is subsequently cleaved to form a two-subunit protein held together with disulfide bonds (PubMed:25079051).</text>
</comment>
<comment type="subcellular location">
    <subcellularLocation>
        <location evidence="6">Secreted</location>
    </subcellularLocation>
</comment>
<comment type="tissue specificity">
    <text evidence="9">Expressed by venom gland.</text>
</comment>
<comment type="similarity">
    <text evidence="8">Belongs to the nucleotide pyrophosphatase/phosphodiesterase family.</text>
</comment>
<reference key="1">
    <citation type="journal article" date="2014" name="Biochimie">
        <title>Phosphodiesterase from Vipera lebetina venom - structure and characterization.</title>
        <authorList>
            <person name="Trummal K."/>
            <person name="Aaspollu A."/>
            <person name="Tonismaegi K."/>
            <person name="Samel M."/>
            <person name="Subbi J."/>
            <person name="Siigur J."/>
            <person name="Siigur E."/>
        </authorList>
    </citation>
    <scope>NUCLEOTIDE SEQUENCE [MRNA]</scope>
    <scope>PARTIAL PROTEIN SEQUENCE</scope>
    <scope>FUNCTION</scope>
    <scope>CATALYTIC ACTIVITY</scope>
    <scope>SUBCELLULAR LOCATION</scope>
    <scope>IDENTIFICATION BY MASS SPECTROMETRY</scope>
    <scope>3D-STRUCTURE MODELING</scope>
    <source>
        <tissue>Venom</tissue>
        <tissue>Venom gland</tissue>
    </source>
</reference>
<proteinExistence type="evidence at protein level"/>
<accession>W8E7D1</accession>
<sequence length="851" mass="96181">MIQQKVLFISLVAVALGLGLGLGLKESVEPQVSCRYRCNETFSKMASGCSCDDKCTERQACCQDYEDTCVLPTQSWSCSKLRCSEKRMANVLCSCSEDCLEKKDCCTDYKSICKGETSWLKDQCASSSAAQCPSGFEQSPLILFSMDGFRAGYLETWDSLMPNINKLKTCGTHAKYMRAVYPTKTFVNHYTIVTGLYPESHGIIDNNIYDVTLNLNFSLSAPTMTNPAWWGGQPIWHTVTYQGLKAATYFWPGSEVKINGSYPTIYKVYNKSIPFEARVTEVLKWLDLPKAERPDFVTLYIEEPDTTGHKFGPVSGEIIMALQMADRTLGMLMEGLKQRNLHNCVNLILLADHGMEQISCNRLEYMTDYFDKVDFFMYEGPAPRIRSKNVPKDFYTFDSEGIVRNLTCQKPKQYFKAYLAKDLPKRLHYVNNIRIDKVNLMVDQQWMAVRNKNYNRCNGGTHGYDNEFKSMQAIFLAHGPGFKGKNEVTSFENIEVYNLMCDLLKLKPAPNNGTHGSLNHLLKNPFYNPSPAKEQTSPLSCPFGPVPSPDVSGCKCSSITDLGKVNERLNLNNQAKTESEAHNLPYGRPQVLQNHSKYCLLHQAKYISAYSQDVLMPLWSSYTINKSPPTSVPPSASDCLRLDVRIPAAQSQTCSNYQPDLTITPGFLYPPNFGSSNFEQYDALITSNLVPMFKGFTRLWNYFHGTLLPKYARERNGLNVISGPIFDYNYDGHFDSYDTIKEYVNDTKIPIPTHFFVVLTSCENQINTPLNCPGSLKVLSFILPHRPDNSESCADTSPDNLWVEERIQTHTARVRDVELLTGLNFYSGLKQPLPETLQLKTFLPIFVNPVN</sequence>
<name>PDE_MACLB</name>
<feature type="signal peptide" evidence="6">
    <location>
        <begin position="1"/>
        <end position="23"/>
    </location>
</feature>
<feature type="chain" id="PRO_5004907664" description="Venom phosphodiesterase" evidence="9">
    <location>
        <begin position="24"/>
        <end position="851"/>
    </location>
</feature>
<feature type="domain" description="SMB 1" evidence="4">
    <location>
        <begin position="30"/>
        <end position="73"/>
    </location>
</feature>
<feature type="domain" description="SMB 2" evidence="4">
    <location>
        <begin position="74"/>
        <end position="118"/>
    </location>
</feature>
<feature type="short sequence motif" description="Cell attachment site" evidence="3">
    <location>
        <begin position="58"/>
        <end position="60"/>
    </location>
</feature>
<feature type="active site" description="AMP-threonine intermediate" evidence="1">
    <location>
        <position position="185"/>
    </location>
</feature>
<feature type="binding site" evidence="1">
    <location>
        <position position="147"/>
    </location>
    <ligand>
        <name>a divalent metal cation</name>
        <dbReference type="ChEBI" id="CHEBI:60240"/>
        <label>2</label>
    </ligand>
</feature>
<feature type="binding site" evidence="1">
    <location>
        <position position="185"/>
    </location>
    <ligand>
        <name>a divalent metal cation</name>
        <dbReference type="ChEBI" id="CHEBI:60240"/>
        <label>2</label>
    </ligand>
</feature>
<feature type="binding site" evidence="1">
    <location>
        <position position="271"/>
    </location>
    <ligand>
        <name>AMP</name>
        <dbReference type="ChEBI" id="CHEBI:456215"/>
    </ligand>
</feature>
<feature type="binding site" evidence="1">
    <location>
        <position position="305"/>
    </location>
    <ligand>
        <name>a divalent metal cation</name>
        <dbReference type="ChEBI" id="CHEBI:60240"/>
        <label>1</label>
    </ligand>
</feature>
<feature type="binding site" evidence="1">
    <location>
        <position position="309"/>
    </location>
    <ligand>
        <name>a divalent metal cation</name>
        <dbReference type="ChEBI" id="CHEBI:60240"/>
        <label>1</label>
    </ligand>
</feature>
<feature type="binding site" evidence="1">
    <location>
        <position position="309"/>
    </location>
    <ligand>
        <name>AMP</name>
        <dbReference type="ChEBI" id="CHEBI:456215"/>
    </ligand>
</feature>
<feature type="binding site" evidence="1">
    <location>
        <position position="352"/>
    </location>
    <ligand>
        <name>a divalent metal cation</name>
        <dbReference type="ChEBI" id="CHEBI:60240"/>
        <label>2</label>
    </ligand>
</feature>
<feature type="binding site" evidence="1">
    <location>
        <position position="353"/>
    </location>
    <ligand>
        <name>a divalent metal cation</name>
        <dbReference type="ChEBI" id="CHEBI:60240"/>
        <label>2</label>
    </ligand>
</feature>
<feature type="binding site" evidence="1">
    <location>
        <position position="462"/>
    </location>
    <ligand>
        <name>a divalent metal cation</name>
        <dbReference type="ChEBI" id="CHEBI:60240"/>
        <label>1</label>
    </ligand>
</feature>
<feature type="site" description="Cleavage" evidence="6">
    <location>
        <begin position="421"/>
        <end position="422"/>
    </location>
</feature>
<feature type="glycosylation site" description="N-linked (GlcNAc...) asparagine" evidence="5">
    <location>
        <position position="39"/>
    </location>
</feature>
<feature type="glycosylation site" description="N-linked (GlcNAc...) asparagine" evidence="5">
    <location>
        <position position="216"/>
    </location>
</feature>
<feature type="glycosylation site" description="N-linked (GlcNAc...) asparagine" evidence="5">
    <location>
        <position position="259"/>
    </location>
</feature>
<feature type="glycosylation site" description="N-linked (GlcNAc...) asparagine" evidence="5">
    <location>
        <position position="270"/>
    </location>
</feature>
<feature type="glycosylation site" description="N-linked (GlcNAc...) asparagine" evidence="5">
    <location>
        <position position="405"/>
    </location>
</feature>
<feature type="glycosylation site" description="N-linked (GlcNAc...) asparagine" evidence="5">
    <location>
        <position position="512"/>
    </location>
</feature>
<feature type="glycosylation site" description="N-linked (GlcNAc...) asparagine" evidence="5">
    <location>
        <position position="594"/>
    </location>
</feature>
<feature type="glycosylation site" description="N-linked (GlcNAc...) asparagine" evidence="5">
    <location>
        <position position="745"/>
    </location>
</feature>
<feature type="disulfide bond" description="Alternate" evidence="1">
    <location>
        <begin position="34"/>
        <end position="51"/>
    </location>
</feature>
<feature type="disulfide bond" description="Alternate" evidence="4">
    <location>
        <begin position="34"/>
        <end position="38"/>
    </location>
</feature>
<feature type="disulfide bond" description="Alternate" evidence="1">
    <location>
        <begin position="38"/>
        <end position="69"/>
    </location>
</feature>
<feature type="disulfide bond" description="Alternate" evidence="1">
    <location>
        <begin position="49"/>
        <end position="62"/>
    </location>
</feature>
<feature type="disulfide bond" description="Alternate" evidence="4">
    <location>
        <begin position="49"/>
        <end position="51"/>
    </location>
</feature>
<feature type="disulfide bond" evidence="1">
    <location>
        <begin position="55"/>
        <end position="61"/>
    </location>
</feature>
<feature type="disulfide bond" description="Alternate" evidence="4">
    <location>
        <begin position="62"/>
        <end position="69"/>
    </location>
</feature>
<feature type="disulfide bond" description="Alternate" evidence="1">
    <location>
        <begin position="78"/>
        <end position="95"/>
    </location>
</feature>
<feature type="disulfide bond" description="Alternate" evidence="4">
    <location>
        <begin position="78"/>
        <end position="83"/>
    </location>
</feature>
<feature type="disulfide bond" description="Alternate" evidence="1">
    <location>
        <begin position="83"/>
        <end position="113"/>
    </location>
</feature>
<feature type="disulfide bond" description="Alternate" evidence="1">
    <location>
        <begin position="93"/>
        <end position="106"/>
    </location>
</feature>
<feature type="disulfide bond" description="Alternate" evidence="4">
    <location>
        <begin position="93"/>
        <end position="95"/>
    </location>
</feature>
<feature type="disulfide bond" evidence="1">
    <location>
        <begin position="99"/>
        <end position="105"/>
    </location>
</feature>
<feature type="disulfide bond" description="Alternate" evidence="4">
    <location>
        <begin position="106"/>
        <end position="113"/>
    </location>
</feature>
<feature type="disulfide bond" evidence="1">
    <location>
        <begin position="124"/>
        <end position="170"/>
    </location>
</feature>
<feature type="disulfide bond" evidence="1">
    <location>
        <begin position="132"/>
        <end position="344"/>
    </location>
</feature>
<feature type="disulfide bond" evidence="1">
    <location>
        <begin position="360"/>
        <end position="457"/>
    </location>
</feature>
<feature type="disulfide bond" evidence="1">
    <location>
        <begin position="408"/>
        <end position="793"/>
    </location>
</feature>
<feature type="disulfide bond" evidence="1">
    <location>
        <begin position="541"/>
        <end position="599"/>
    </location>
</feature>
<feature type="disulfide bond" evidence="1">
    <location>
        <begin position="554"/>
        <end position="654"/>
    </location>
</feature>
<feature type="disulfide bond" evidence="1">
    <location>
        <begin position="556"/>
        <end position="639"/>
    </location>
</feature>
<feature type="disulfide bond" evidence="1">
    <location>
        <begin position="762"/>
        <end position="772"/>
    </location>
</feature>
<keyword id="KW-0903">Direct protein sequencing</keyword>
<keyword id="KW-1015">Disulfide bond</keyword>
<keyword id="KW-0325">Glycoprotein</keyword>
<keyword id="KW-1199">Hemostasis impairing toxin</keyword>
<keyword id="KW-0378">Hydrolase</keyword>
<keyword id="KW-0479">Metal-binding</keyword>
<keyword id="KW-1201">Platelet aggregation inhibiting toxin</keyword>
<keyword id="KW-0677">Repeat</keyword>
<keyword id="KW-0964">Secreted</keyword>
<keyword id="KW-0732">Signal</keyword>
<keyword id="KW-0800">Toxin</keyword>
<evidence type="ECO:0000250" key="1">
    <source>
        <dbReference type="UniProtKB" id="A0A2D0TC04"/>
    </source>
</evidence>
<evidence type="ECO:0000250" key="2">
    <source>
        <dbReference type="UniProtKB" id="J3SEZ3"/>
    </source>
</evidence>
<evidence type="ECO:0000255" key="3"/>
<evidence type="ECO:0000255" key="4">
    <source>
        <dbReference type="PROSITE-ProRule" id="PRU00350"/>
    </source>
</evidence>
<evidence type="ECO:0000255" key="5">
    <source>
        <dbReference type="PROSITE-ProRule" id="PRU00498"/>
    </source>
</evidence>
<evidence type="ECO:0000269" key="6">
    <source>
    </source>
</evidence>
<evidence type="ECO:0000303" key="7">
    <source>
    </source>
</evidence>
<evidence type="ECO:0000305" key="8"/>
<evidence type="ECO:0000305" key="9">
    <source>
    </source>
</evidence>
<protein>
    <recommendedName>
        <fullName evidence="7">Venom phosphodiesterase</fullName>
        <shortName evidence="7">PDE</shortName>
        <shortName evidence="7">VLPDE</shortName>
        <ecNumber evidence="6">3.6.1.-</ecNumber>
    </recommendedName>
</protein>
<organism>
    <name type="scientific">Macrovipera lebetinus</name>
    <name type="common">Levantine viper</name>
    <name type="synonym">Vipera lebetina</name>
    <dbReference type="NCBI Taxonomy" id="3148341"/>
    <lineage>
        <taxon>Eukaryota</taxon>
        <taxon>Metazoa</taxon>
        <taxon>Chordata</taxon>
        <taxon>Craniata</taxon>
        <taxon>Vertebrata</taxon>
        <taxon>Euteleostomi</taxon>
        <taxon>Lepidosauria</taxon>
        <taxon>Squamata</taxon>
        <taxon>Bifurcata</taxon>
        <taxon>Unidentata</taxon>
        <taxon>Episquamata</taxon>
        <taxon>Toxicofera</taxon>
        <taxon>Serpentes</taxon>
        <taxon>Colubroidea</taxon>
        <taxon>Viperidae</taxon>
        <taxon>Viperinae</taxon>
        <taxon>Macrovipera</taxon>
    </lineage>
</organism>